<organism>
    <name type="scientific">Chloroherpeton thalassium (strain ATCC 35110 / GB-78)</name>
    <dbReference type="NCBI Taxonomy" id="517418"/>
    <lineage>
        <taxon>Bacteria</taxon>
        <taxon>Pseudomonadati</taxon>
        <taxon>Chlorobiota</taxon>
        <taxon>Chlorobiia</taxon>
        <taxon>Chlorobiales</taxon>
        <taxon>Chloroherpetonaceae</taxon>
        <taxon>Chloroherpeton</taxon>
    </lineage>
</organism>
<reference key="1">
    <citation type="submission" date="2008-06" db="EMBL/GenBank/DDBJ databases">
        <title>Complete sequence of Chloroherpeton thalassium ATCC 35110.</title>
        <authorList>
            <consortium name="US DOE Joint Genome Institute"/>
            <person name="Lucas S."/>
            <person name="Copeland A."/>
            <person name="Lapidus A."/>
            <person name="Glavina del Rio T."/>
            <person name="Dalin E."/>
            <person name="Tice H."/>
            <person name="Bruce D."/>
            <person name="Goodwin L."/>
            <person name="Pitluck S."/>
            <person name="Schmutz J."/>
            <person name="Larimer F."/>
            <person name="Land M."/>
            <person name="Hauser L."/>
            <person name="Kyrpides N."/>
            <person name="Mikhailova N."/>
            <person name="Liu Z."/>
            <person name="Li T."/>
            <person name="Zhao F."/>
            <person name="Overmann J."/>
            <person name="Bryant D.A."/>
            <person name="Richardson P."/>
        </authorList>
    </citation>
    <scope>NUCLEOTIDE SEQUENCE [LARGE SCALE GENOMIC DNA]</scope>
    <source>
        <strain>ATCC 35110 / GB-78</strain>
    </source>
</reference>
<keyword id="KW-1185">Reference proteome</keyword>
<keyword id="KW-0687">Ribonucleoprotein</keyword>
<keyword id="KW-0689">Ribosomal protein</keyword>
<keyword id="KW-0694">RNA-binding</keyword>
<keyword id="KW-0699">rRNA-binding</keyword>
<accession>B3QY25</accession>
<sequence>MEVKVLNKDGAETGETVELKPVIFEIEPNDHAIYLDVRSIMANQHQGTHKVKTRSEVSGGGRKPYRQKGTGNARRGSSRSPVMIGGGAIFGPKPHDYVVGINKKMKRLARISALSYKAKNNEIIVMEDYVPSEIKTKEVVSFLKSLGLNEKKTLLLMPSKNDVMYKSGRNISKLSILEANKASTYDLLNNKTLLIQKSALETLERSLGVA</sequence>
<proteinExistence type="inferred from homology"/>
<protein>
    <recommendedName>
        <fullName evidence="1">Large ribosomal subunit protein uL4</fullName>
    </recommendedName>
    <alternativeName>
        <fullName evidence="3">50S ribosomal protein L4</fullName>
    </alternativeName>
</protein>
<name>RL4_CHLT3</name>
<evidence type="ECO:0000255" key="1">
    <source>
        <dbReference type="HAMAP-Rule" id="MF_01328"/>
    </source>
</evidence>
<evidence type="ECO:0000256" key="2">
    <source>
        <dbReference type="SAM" id="MobiDB-lite"/>
    </source>
</evidence>
<evidence type="ECO:0000305" key="3"/>
<feature type="chain" id="PRO_1000142102" description="Large ribosomal subunit protein uL4">
    <location>
        <begin position="1"/>
        <end position="210"/>
    </location>
</feature>
<feature type="region of interest" description="Disordered" evidence="2">
    <location>
        <begin position="44"/>
        <end position="79"/>
    </location>
</feature>
<dbReference type="EMBL" id="CP001100">
    <property type="protein sequence ID" value="ACF13553.1"/>
    <property type="molecule type" value="Genomic_DNA"/>
</dbReference>
<dbReference type="RefSeq" id="WP_012499637.1">
    <property type="nucleotide sequence ID" value="NC_011026.1"/>
</dbReference>
<dbReference type="SMR" id="B3QY25"/>
<dbReference type="STRING" id="517418.Ctha_1089"/>
<dbReference type="KEGG" id="cts:Ctha_1089"/>
<dbReference type="eggNOG" id="COG0088">
    <property type="taxonomic scope" value="Bacteria"/>
</dbReference>
<dbReference type="HOGENOM" id="CLU_041575_5_2_10"/>
<dbReference type="OrthoDB" id="9803201at2"/>
<dbReference type="Proteomes" id="UP000001208">
    <property type="component" value="Chromosome"/>
</dbReference>
<dbReference type="GO" id="GO:1990904">
    <property type="term" value="C:ribonucleoprotein complex"/>
    <property type="evidence" value="ECO:0007669"/>
    <property type="project" value="UniProtKB-KW"/>
</dbReference>
<dbReference type="GO" id="GO:0005840">
    <property type="term" value="C:ribosome"/>
    <property type="evidence" value="ECO:0007669"/>
    <property type="project" value="UniProtKB-KW"/>
</dbReference>
<dbReference type="GO" id="GO:0019843">
    <property type="term" value="F:rRNA binding"/>
    <property type="evidence" value="ECO:0007669"/>
    <property type="project" value="UniProtKB-UniRule"/>
</dbReference>
<dbReference type="GO" id="GO:0003735">
    <property type="term" value="F:structural constituent of ribosome"/>
    <property type="evidence" value="ECO:0007669"/>
    <property type="project" value="InterPro"/>
</dbReference>
<dbReference type="GO" id="GO:0006412">
    <property type="term" value="P:translation"/>
    <property type="evidence" value="ECO:0007669"/>
    <property type="project" value="UniProtKB-UniRule"/>
</dbReference>
<dbReference type="Gene3D" id="3.40.1370.10">
    <property type="match status" value="1"/>
</dbReference>
<dbReference type="HAMAP" id="MF_01328_B">
    <property type="entry name" value="Ribosomal_uL4_B"/>
    <property type="match status" value="1"/>
</dbReference>
<dbReference type="InterPro" id="IPR002136">
    <property type="entry name" value="Ribosomal_uL4"/>
</dbReference>
<dbReference type="InterPro" id="IPR013005">
    <property type="entry name" value="Ribosomal_uL4-like"/>
</dbReference>
<dbReference type="InterPro" id="IPR023574">
    <property type="entry name" value="Ribosomal_uL4_dom_sf"/>
</dbReference>
<dbReference type="NCBIfam" id="TIGR03953">
    <property type="entry name" value="rplD_bact"/>
    <property type="match status" value="1"/>
</dbReference>
<dbReference type="PANTHER" id="PTHR10746">
    <property type="entry name" value="50S RIBOSOMAL PROTEIN L4"/>
    <property type="match status" value="1"/>
</dbReference>
<dbReference type="PANTHER" id="PTHR10746:SF6">
    <property type="entry name" value="LARGE RIBOSOMAL SUBUNIT PROTEIN UL4M"/>
    <property type="match status" value="1"/>
</dbReference>
<dbReference type="Pfam" id="PF00573">
    <property type="entry name" value="Ribosomal_L4"/>
    <property type="match status" value="1"/>
</dbReference>
<dbReference type="SUPFAM" id="SSF52166">
    <property type="entry name" value="Ribosomal protein L4"/>
    <property type="match status" value="1"/>
</dbReference>
<gene>
    <name evidence="1" type="primary">rplD</name>
    <name type="ordered locus">Ctha_1089</name>
</gene>
<comment type="function">
    <text evidence="1">One of the primary rRNA binding proteins, this protein initially binds near the 5'-end of the 23S rRNA. It is important during the early stages of 50S assembly. It makes multiple contacts with different domains of the 23S rRNA in the assembled 50S subunit and ribosome.</text>
</comment>
<comment type="function">
    <text evidence="1">Forms part of the polypeptide exit tunnel.</text>
</comment>
<comment type="subunit">
    <text evidence="1">Part of the 50S ribosomal subunit.</text>
</comment>
<comment type="similarity">
    <text evidence="1">Belongs to the universal ribosomal protein uL4 family.</text>
</comment>